<reference key="1">
    <citation type="journal article" date="2005" name="Nat. Genet.">
        <title>The complete genome sequence of Francisella tularensis, the causative agent of tularemia.</title>
        <authorList>
            <person name="Larsson P."/>
            <person name="Oyston P.C.F."/>
            <person name="Chain P."/>
            <person name="Chu M.C."/>
            <person name="Duffield M."/>
            <person name="Fuxelius H.-H."/>
            <person name="Garcia E."/>
            <person name="Haelltorp G."/>
            <person name="Johansson D."/>
            <person name="Isherwood K.E."/>
            <person name="Karp P.D."/>
            <person name="Larsson E."/>
            <person name="Liu Y."/>
            <person name="Michell S."/>
            <person name="Prior J."/>
            <person name="Prior R."/>
            <person name="Malfatti S."/>
            <person name="Sjoestedt A."/>
            <person name="Svensson K."/>
            <person name="Thompson N."/>
            <person name="Vergez L."/>
            <person name="Wagg J.K."/>
            <person name="Wren B.W."/>
            <person name="Lindler L.E."/>
            <person name="Andersson S.G.E."/>
            <person name="Forsman M."/>
            <person name="Titball R.W."/>
        </authorList>
    </citation>
    <scope>NUCLEOTIDE SEQUENCE [LARGE SCALE GENOMIC DNA]</scope>
    <source>
        <strain>SCHU S4 / Schu 4</strain>
    </source>
</reference>
<organism>
    <name type="scientific">Francisella tularensis subsp. tularensis (strain SCHU S4 / Schu 4)</name>
    <dbReference type="NCBI Taxonomy" id="177416"/>
    <lineage>
        <taxon>Bacteria</taxon>
        <taxon>Pseudomonadati</taxon>
        <taxon>Pseudomonadota</taxon>
        <taxon>Gammaproteobacteria</taxon>
        <taxon>Thiotrichales</taxon>
        <taxon>Francisellaceae</taxon>
        <taxon>Francisella</taxon>
    </lineage>
</organism>
<sequence>MSKQEKSNVEDKSLDIETAAQVETAQESASGALEELSVEEQLERAKDTIKELEDSCDQFKDEALRAKAEMENIRKRAERDVSNARKFGIEKFSKELLPVIDSIEQALKHEVKLEEAIAMKEGIELTAKMLVDILKKNGVEELDPKGEKFDPNLHEAMAMIPNPEFEDNTIFDVFQKGYMLNGRIVRAAKVVIVKN</sequence>
<keyword id="KW-0143">Chaperone</keyword>
<keyword id="KW-0963">Cytoplasm</keyword>
<keyword id="KW-1185">Reference proteome</keyword>
<keyword id="KW-0346">Stress response</keyword>
<accession>Q5NFG6</accession>
<protein>
    <recommendedName>
        <fullName evidence="1">Protein GrpE</fullName>
    </recommendedName>
    <alternativeName>
        <fullName evidence="1">HSP-70 cofactor</fullName>
    </alternativeName>
</protein>
<evidence type="ECO:0000255" key="1">
    <source>
        <dbReference type="HAMAP-Rule" id="MF_01151"/>
    </source>
</evidence>
<gene>
    <name evidence="1" type="primary">grpE</name>
    <name type="ordered locus">FTT_1270c</name>
</gene>
<name>GRPE_FRATT</name>
<dbReference type="EMBL" id="AJ749949">
    <property type="protein sequence ID" value="CAG45903.1"/>
    <property type="molecule type" value="Genomic_DNA"/>
</dbReference>
<dbReference type="RefSeq" id="WP_003021933.1">
    <property type="nucleotide sequence ID" value="NZ_CP010290.1"/>
</dbReference>
<dbReference type="RefSeq" id="YP_170226.1">
    <property type="nucleotide sequence ID" value="NC_006570.2"/>
</dbReference>
<dbReference type="SMR" id="Q5NFG6"/>
<dbReference type="STRING" id="177416.FTT_1270c"/>
<dbReference type="DNASU" id="3191601"/>
<dbReference type="EnsemblBacteria" id="CAG45903">
    <property type="protein sequence ID" value="CAG45903"/>
    <property type="gene ID" value="FTT_1270c"/>
</dbReference>
<dbReference type="KEGG" id="ftu:FTT_1270c"/>
<dbReference type="eggNOG" id="COG0576">
    <property type="taxonomic scope" value="Bacteria"/>
</dbReference>
<dbReference type="OrthoDB" id="9789811at2"/>
<dbReference type="Proteomes" id="UP000001174">
    <property type="component" value="Chromosome"/>
</dbReference>
<dbReference type="GO" id="GO:0005829">
    <property type="term" value="C:cytosol"/>
    <property type="evidence" value="ECO:0007669"/>
    <property type="project" value="TreeGrafter"/>
</dbReference>
<dbReference type="GO" id="GO:0000774">
    <property type="term" value="F:adenyl-nucleotide exchange factor activity"/>
    <property type="evidence" value="ECO:0007669"/>
    <property type="project" value="InterPro"/>
</dbReference>
<dbReference type="GO" id="GO:0042803">
    <property type="term" value="F:protein homodimerization activity"/>
    <property type="evidence" value="ECO:0007669"/>
    <property type="project" value="InterPro"/>
</dbReference>
<dbReference type="GO" id="GO:0051087">
    <property type="term" value="F:protein-folding chaperone binding"/>
    <property type="evidence" value="ECO:0007669"/>
    <property type="project" value="InterPro"/>
</dbReference>
<dbReference type="GO" id="GO:0051082">
    <property type="term" value="F:unfolded protein binding"/>
    <property type="evidence" value="ECO:0007669"/>
    <property type="project" value="TreeGrafter"/>
</dbReference>
<dbReference type="GO" id="GO:0006457">
    <property type="term" value="P:protein folding"/>
    <property type="evidence" value="ECO:0007669"/>
    <property type="project" value="InterPro"/>
</dbReference>
<dbReference type="CDD" id="cd00446">
    <property type="entry name" value="GrpE"/>
    <property type="match status" value="1"/>
</dbReference>
<dbReference type="FunFam" id="2.30.22.10:FF:000001">
    <property type="entry name" value="Protein GrpE"/>
    <property type="match status" value="1"/>
</dbReference>
<dbReference type="Gene3D" id="3.90.20.20">
    <property type="match status" value="1"/>
</dbReference>
<dbReference type="Gene3D" id="2.30.22.10">
    <property type="entry name" value="Head domain of nucleotide exchange factor GrpE"/>
    <property type="match status" value="1"/>
</dbReference>
<dbReference type="HAMAP" id="MF_01151">
    <property type="entry name" value="GrpE"/>
    <property type="match status" value="1"/>
</dbReference>
<dbReference type="InterPro" id="IPR000740">
    <property type="entry name" value="GrpE"/>
</dbReference>
<dbReference type="InterPro" id="IPR013805">
    <property type="entry name" value="GrpE_coiled_coil"/>
</dbReference>
<dbReference type="InterPro" id="IPR009012">
    <property type="entry name" value="GrpE_head"/>
</dbReference>
<dbReference type="NCBIfam" id="NF010737">
    <property type="entry name" value="PRK14139.1"/>
    <property type="match status" value="1"/>
</dbReference>
<dbReference type="NCBIfam" id="NF010738">
    <property type="entry name" value="PRK14140.1"/>
    <property type="match status" value="1"/>
</dbReference>
<dbReference type="NCBIfam" id="NF010746">
    <property type="entry name" value="PRK14148.1"/>
    <property type="match status" value="1"/>
</dbReference>
<dbReference type="NCBIfam" id="NF010748">
    <property type="entry name" value="PRK14150.1"/>
    <property type="match status" value="1"/>
</dbReference>
<dbReference type="PANTHER" id="PTHR21237">
    <property type="entry name" value="GRPE PROTEIN"/>
    <property type="match status" value="1"/>
</dbReference>
<dbReference type="PANTHER" id="PTHR21237:SF23">
    <property type="entry name" value="GRPE PROTEIN HOMOLOG, MITOCHONDRIAL"/>
    <property type="match status" value="1"/>
</dbReference>
<dbReference type="Pfam" id="PF01025">
    <property type="entry name" value="GrpE"/>
    <property type="match status" value="1"/>
</dbReference>
<dbReference type="PRINTS" id="PR00773">
    <property type="entry name" value="GRPEPROTEIN"/>
</dbReference>
<dbReference type="SUPFAM" id="SSF58014">
    <property type="entry name" value="Coiled-coil domain of nucleotide exchange factor GrpE"/>
    <property type="match status" value="1"/>
</dbReference>
<dbReference type="SUPFAM" id="SSF51064">
    <property type="entry name" value="Head domain of nucleotide exchange factor GrpE"/>
    <property type="match status" value="1"/>
</dbReference>
<dbReference type="PROSITE" id="PS01071">
    <property type="entry name" value="GRPE"/>
    <property type="match status" value="1"/>
</dbReference>
<proteinExistence type="inferred from homology"/>
<comment type="function">
    <text evidence="1">Participates actively in the response to hyperosmotic and heat shock by preventing the aggregation of stress-denatured proteins, in association with DnaK and GrpE. It is the nucleotide exchange factor for DnaK and may function as a thermosensor. Unfolded proteins bind initially to DnaJ; upon interaction with the DnaJ-bound protein, DnaK hydrolyzes its bound ATP, resulting in the formation of a stable complex. GrpE releases ADP from DnaK; ATP binding to DnaK triggers the release of the substrate protein, thus completing the reaction cycle. Several rounds of ATP-dependent interactions between DnaJ, DnaK and GrpE are required for fully efficient folding.</text>
</comment>
<comment type="subunit">
    <text evidence="1">Homodimer.</text>
</comment>
<comment type="subcellular location">
    <subcellularLocation>
        <location evidence="1">Cytoplasm</location>
    </subcellularLocation>
</comment>
<comment type="similarity">
    <text evidence="1">Belongs to the GrpE family.</text>
</comment>
<feature type="chain" id="PRO_1000053584" description="Protein GrpE">
    <location>
        <begin position="1"/>
        <end position="195"/>
    </location>
</feature>